<evidence type="ECO:0000255" key="1">
    <source>
        <dbReference type="HAMAP-Rule" id="MF_00003"/>
    </source>
</evidence>
<sequence>MSRKRTSPNRNVQIADQIQRDLSELIMREVKDPRIGIVTIQSVELTPDYAHAKVYFTALTGDPAKTQEALNHASGHLHNLLFKRLHIHTVPTLHFHYDQTIEKAVEMSRLIKEANSTRAKDDDEADAAAKDD</sequence>
<dbReference type="EMBL" id="CP000151">
    <property type="protein sequence ID" value="ABB08237.1"/>
    <property type="molecule type" value="Genomic_DNA"/>
</dbReference>
<dbReference type="RefSeq" id="WP_011351799.1">
    <property type="nucleotide sequence ID" value="NZ_WNDV01000004.1"/>
</dbReference>
<dbReference type="SMR" id="Q39H29"/>
<dbReference type="GeneID" id="93139835"/>
<dbReference type="KEGG" id="bur:Bcep18194_A4642"/>
<dbReference type="PATRIC" id="fig|482957.22.peg.1552"/>
<dbReference type="HOGENOM" id="CLU_089475_5_1_4"/>
<dbReference type="Proteomes" id="UP000002705">
    <property type="component" value="Chromosome 1"/>
</dbReference>
<dbReference type="GO" id="GO:0005829">
    <property type="term" value="C:cytosol"/>
    <property type="evidence" value="ECO:0007669"/>
    <property type="project" value="TreeGrafter"/>
</dbReference>
<dbReference type="GO" id="GO:0043024">
    <property type="term" value="F:ribosomal small subunit binding"/>
    <property type="evidence" value="ECO:0007669"/>
    <property type="project" value="TreeGrafter"/>
</dbReference>
<dbReference type="GO" id="GO:0030490">
    <property type="term" value="P:maturation of SSU-rRNA"/>
    <property type="evidence" value="ECO:0007669"/>
    <property type="project" value="UniProtKB-UniRule"/>
</dbReference>
<dbReference type="Gene3D" id="3.30.300.20">
    <property type="match status" value="1"/>
</dbReference>
<dbReference type="HAMAP" id="MF_00003">
    <property type="entry name" value="RbfA"/>
    <property type="match status" value="1"/>
</dbReference>
<dbReference type="InterPro" id="IPR015946">
    <property type="entry name" value="KH_dom-like_a/b"/>
</dbReference>
<dbReference type="InterPro" id="IPR000238">
    <property type="entry name" value="RbfA"/>
</dbReference>
<dbReference type="InterPro" id="IPR023799">
    <property type="entry name" value="RbfA_dom_sf"/>
</dbReference>
<dbReference type="NCBIfam" id="TIGR00082">
    <property type="entry name" value="rbfA"/>
    <property type="match status" value="1"/>
</dbReference>
<dbReference type="PANTHER" id="PTHR33515">
    <property type="entry name" value="RIBOSOME-BINDING FACTOR A, CHLOROPLASTIC-RELATED"/>
    <property type="match status" value="1"/>
</dbReference>
<dbReference type="PANTHER" id="PTHR33515:SF1">
    <property type="entry name" value="RIBOSOME-BINDING FACTOR A, CHLOROPLASTIC-RELATED"/>
    <property type="match status" value="1"/>
</dbReference>
<dbReference type="Pfam" id="PF02033">
    <property type="entry name" value="RBFA"/>
    <property type="match status" value="1"/>
</dbReference>
<dbReference type="SUPFAM" id="SSF89919">
    <property type="entry name" value="Ribosome-binding factor A, RbfA"/>
    <property type="match status" value="1"/>
</dbReference>
<proteinExistence type="inferred from homology"/>
<name>RBFA_BURL3</name>
<accession>Q39H29</accession>
<protein>
    <recommendedName>
        <fullName evidence="1">Ribosome-binding factor A</fullName>
    </recommendedName>
</protein>
<keyword id="KW-0963">Cytoplasm</keyword>
<keyword id="KW-0690">Ribosome biogenesis</keyword>
<comment type="function">
    <text evidence="1">One of several proteins that assist in the late maturation steps of the functional core of the 30S ribosomal subunit. Associates with free 30S ribosomal subunits (but not with 30S subunits that are part of 70S ribosomes or polysomes). Required for efficient processing of 16S rRNA. May interact with the 5'-terminal helix region of 16S rRNA.</text>
</comment>
<comment type="subunit">
    <text evidence="1">Monomer. Binds 30S ribosomal subunits, but not 50S ribosomal subunits or 70S ribosomes.</text>
</comment>
<comment type="subcellular location">
    <subcellularLocation>
        <location evidence="1">Cytoplasm</location>
    </subcellularLocation>
</comment>
<comment type="similarity">
    <text evidence="1">Belongs to the RbfA family.</text>
</comment>
<reference key="1">
    <citation type="submission" date="2005-10" db="EMBL/GenBank/DDBJ databases">
        <title>Complete sequence of chromosome 1 of Burkholderia sp. 383.</title>
        <authorList>
            <consortium name="US DOE Joint Genome Institute"/>
            <person name="Copeland A."/>
            <person name="Lucas S."/>
            <person name="Lapidus A."/>
            <person name="Barry K."/>
            <person name="Detter J.C."/>
            <person name="Glavina T."/>
            <person name="Hammon N."/>
            <person name="Israni S."/>
            <person name="Pitluck S."/>
            <person name="Chain P."/>
            <person name="Malfatti S."/>
            <person name="Shin M."/>
            <person name="Vergez L."/>
            <person name="Schmutz J."/>
            <person name="Larimer F."/>
            <person name="Land M."/>
            <person name="Kyrpides N."/>
            <person name="Lykidis A."/>
            <person name="Richardson P."/>
        </authorList>
    </citation>
    <scope>NUCLEOTIDE SEQUENCE [LARGE SCALE GENOMIC DNA]</scope>
    <source>
        <strain>ATCC 17760 / DSM 23089 / LMG 22485 / NCIMB 9086 / R18194 / 383</strain>
    </source>
</reference>
<gene>
    <name evidence="1" type="primary">rbfA</name>
    <name type="ordered locus">Bcep18194_A4642</name>
</gene>
<organism>
    <name type="scientific">Burkholderia lata (strain ATCC 17760 / DSM 23089 / LMG 22485 / NCIMB 9086 / R18194 / 383)</name>
    <dbReference type="NCBI Taxonomy" id="482957"/>
    <lineage>
        <taxon>Bacteria</taxon>
        <taxon>Pseudomonadati</taxon>
        <taxon>Pseudomonadota</taxon>
        <taxon>Betaproteobacteria</taxon>
        <taxon>Burkholderiales</taxon>
        <taxon>Burkholderiaceae</taxon>
        <taxon>Burkholderia</taxon>
        <taxon>Burkholderia cepacia complex</taxon>
    </lineage>
</organism>
<feature type="chain" id="PRO_1000000083" description="Ribosome-binding factor A">
    <location>
        <begin position="1"/>
        <end position="132"/>
    </location>
</feature>